<sequence>MKSLHVAANAGDLAEDCGILGGDADDTVLMDGIDEVGREIWLDDHGGDNNHVHGHQDDDLIVHHDPSIFYGDLPTLPDFPCMSSSSSSSTSPAPVNAIVSSASSSSAASSSTSSAASWAILRSDGEDPTPNQNQYASGNCDDSSGALQSTASMEIPLDSSQGFGCGEGGGDCIDMMETFGYMDLLDSNEFFDTSAIFSQDDDTQNPNLMDQTLERQEDQVVVPMMENNSGGDMQMMNSSLEQDDDLAAVFLEWLKNNKETVSAEDLRKVKIKKATIESAARRLGGGKEAMKQLLKLILEWVQTNHLQRRRTTTTTTNLSYQQSFQQDPFQNPNPNNNNLIPPSDQTCFSPSTWVPPPPQQQAFVSDPGFGYMPAPNYPPQPEFLPLLESPPSWPPPPQSGPMPHQQFPMPPTSQYNQFGDPTGFNGYNMNPYQYPYVPAGQMRDQRLLRLCSSATKEARKKRMARQRRFLSHHHRHNNNNNNNNNNQQNQTQIGETCAAVAPQLNPVATTATGGTWMYWPNVPAVPPQLPPVMETQLPTMDRAGSASAMPRQQVVPDRRQGWKPEKNLRFLLQKVLKQSDVGNLGRIVLPKKEAETHLPELEARDGISLAMEDIGTSRVWNMRYRFWPNNKSRMYLLENTGDFVKTNGLQEGDFIVIYSDVKCGKYLIRGVKVRQPSGQKPEAPPSSAATKRQNKSQRNINNNSPSANVVVASPTSQTVK</sequence>
<feature type="chain" id="PRO_0000111504" description="B3 domain-containing transcription factor ABI3">
    <location>
        <begin position="1"/>
        <end position="720"/>
    </location>
</feature>
<feature type="DNA-binding region" description="TF-B3" evidence="1">
    <location>
        <begin position="572"/>
        <end position="674"/>
    </location>
</feature>
<feature type="region of interest" description="Disordered" evidence="2">
    <location>
        <begin position="122"/>
        <end position="146"/>
    </location>
</feature>
<feature type="region of interest" description="Disordered" evidence="2">
    <location>
        <begin position="324"/>
        <end position="360"/>
    </location>
</feature>
<feature type="region of interest" description="Disordered" evidence="2">
    <location>
        <begin position="675"/>
        <end position="720"/>
    </location>
</feature>
<feature type="compositionally biased region" description="Polar residues" evidence="2">
    <location>
        <begin position="129"/>
        <end position="146"/>
    </location>
</feature>
<feature type="compositionally biased region" description="Low complexity" evidence="2">
    <location>
        <begin position="324"/>
        <end position="344"/>
    </location>
</feature>
<feature type="compositionally biased region" description="Polar residues" evidence="2">
    <location>
        <begin position="687"/>
        <end position="700"/>
    </location>
</feature>
<feature type="compositionally biased region" description="Low complexity" evidence="2">
    <location>
        <begin position="701"/>
        <end position="714"/>
    </location>
</feature>
<feature type="splice variant" id="VSP_058192" description="In isoform 2." evidence="11">
    <original>YNQFGDPTGFNGYNM</original>
    <variation>TNERSEITPFVFLSN</variation>
    <location>
        <begin position="415"/>
        <end position="429"/>
    </location>
</feature>
<feature type="splice variant" id="VSP_058193" description="In isoform 2." evidence="11">
    <location>
        <begin position="430"/>
        <end position="720"/>
    </location>
</feature>
<feature type="sequence variant" description="In strain: cv. An-1, cv. Br-0, cv. Ct-1, cv. Cvi-1, cv. Edi-0, cv. Ga-0, cv. Kas-1, cv. Kin-0, cv. Landsberg erecta, cv. Ll-0, cv. Lz-0, cv. Ms-0, cv. Mt-0, cv. Nok-3, cv. Oy-0, cv. Se-0, cv. Sorbo, cv. Tsu-1, cv. Van-0, cv. Wa-1 and cv. Wassilewskija." evidence="8">
    <original>M</original>
    <variation>L</variation>
    <location>
        <position position="225"/>
    </location>
</feature>
<feature type="sequence variant" description="In strain: cv. Kas-1 and cv. Sorbo." evidence="8">
    <original>G</original>
    <variation>E</variation>
    <location>
        <position position="231"/>
    </location>
</feature>
<feature type="sequence variant" description="In strain: cv. Cvi-1." evidence="8">
    <original>A</original>
    <variation>T</variation>
    <location>
        <position position="248"/>
    </location>
</feature>
<feature type="sequence conflict" description="In Ref. 4; BAD93896/BAD94272." evidence="13" ref="4">
    <original>S</original>
    <variation>P</variation>
    <location>
        <position position="100"/>
    </location>
</feature>
<feature type="sequence conflict" description="In Ref. 4; BAD94272." evidence="13" ref="4">
    <original>D</original>
    <variation>V</variation>
    <location>
        <position position="344"/>
    </location>
</feature>
<feature type="sequence conflict" description="In Ref. 1; CAA05484." evidence="13" ref="1">
    <location>
        <position position="486"/>
    </location>
</feature>
<feature type="sequence conflict" description="In Ref. 5; BAE96106." evidence="13" ref="5">
    <original>P</original>
    <variation>L</variation>
    <location>
        <position position="556"/>
    </location>
</feature>
<organism>
    <name type="scientific">Arabidopsis thaliana</name>
    <name type="common">Mouse-ear cress</name>
    <dbReference type="NCBI Taxonomy" id="3702"/>
    <lineage>
        <taxon>Eukaryota</taxon>
        <taxon>Viridiplantae</taxon>
        <taxon>Streptophyta</taxon>
        <taxon>Embryophyta</taxon>
        <taxon>Tracheophyta</taxon>
        <taxon>Spermatophyta</taxon>
        <taxon>Magnoliopsida</taxon>
        <taxon>eudicotyledons</taxon>
        <taxon>Gunneridae</taxon>
        <taxon>Pentapetalae</taxon>
        <taxon>rosids</taxon>
        <taxon>malvids</taxon>
        <taxon>Brassicales</taxon>
        <taxon>Brassicaceae</taxon>
        <taxon>Camelineae</taxon>
        <taxon>Arabidopsis</taxon>
    </lineage>
</organism>
<comment type="function">
    <text evidence="9 12">Participates in abscisic acid-regulated gene expression during seed development. Regulates the transcription of SGR1 and SGR2 that are involved in leaf and embryo degreening.</text>
</comment>
<comment type="subunit">
    <text evidence="3 4 5 6 7 9">Interacts (via C-terminus) with SPK1, SCAR3, ABI5, APRR1, AIP2, AIP3 and AIP4. Binds to BZIP10 and BZIP25 and forms complexes made of ABI3, BZIP53 and BZIP25 or BZIP10.</text>
</comment>
<comment type="interaction">
    <interactant intactId="EBI-1578892">
        <id>Q01593</id>
    </interactant>
    <interactant intactId="EBI-2312425">
        <id>Q8RXD3</id>
        <label>AIP2</label>
    </interactant>
    <organismsDiffer>false</organismsDiffer>
    <experiments>3</experiments>
</comment>
<comment type="interaction">
    <interactant intactId="EBI-1578892">
        <id>Q01593</id>
    </interactant>
    <interactant intactId="EBI-2130809">
        <id>Q9M4B5</id>
        <label>PFD4</label>
    </interactant>
    <organismsDiffer>false</organismsDiffer>
    <experiments>2</experiments>
</comment>
<comment type="subcellular location">
    <subcellularLocation>
        <location>Nucleus</location>
    </subcellularLocation>
    <subcellularLocation>
        <location>Cytoplasm</location>
    </subcellularLocation>
    <text>Predominantly found in the nucleus.</text>
</comment>
<comment type="alternative products">
    <event type="alternative splicing"/>
    <isoform>
        <id>Q01593-1</id>
        <name>1</name>
        <name>ABI3-alpha</name>
        <sequence type="displayed"/>
    </isoform>
    <isoform>
        <id>Q01593-2</id>
        <name>2</name>
        <name>ABI3-beta</name>
        <sequence type="described" ref="VSP_058192 VSP_058193"/>
    </isoform>
    <text evidence="11">A number of isoforms are produced. Splicing is regulated by SUA.</text>
</comment>
<comment type="tissue specificity">
    <text evidence="11">Isoform 2 accumulates only at the end of seed maturation.</text>
</comment>
<comment type="developmental stage">
    <text evidence="5">Expressed in the embryos, endosperm, and outer teguments of the seed throughout seed development.</text>
</comment>
<comment type="induction">
    <text evidence="10">Repressed by silencing mediated by polycomb group (PcG) protein complex containing EMF1 and EMF2.</text>
</comment>
<comment type="PTM">
    <text evidence="6">Ubiquitinated by AIP2. Ubiquitination probably leads to its subsequent degradation, thus negatively regulating ABA signaling.</text>
</comment>
<comment type="miscellaneous">
    <text evidence="14">The truncated abi3-6 mutant lacking the DNA-binding domain is unable to localize to the nucleus and is an embryo stay-green mutant.</text>
</comment>
<comment type="miscellaneous">
    <molecule>Isoform 2</molecule>
    <text evidence="11">Due to a cryptic intron removal.</text>
</comment>
<comment type="sequence caution" evidence="13">
    <conflict type="erroneous gene model prediction">
        <sequence resource="EMBL-CDS" id="BAB01214"/>
    </conflict>
</comment>
<evidence type="ECO:0000255" key="1">
    <source>
        <dbReference type="PROSITE-ProRule" id="PRU00326"/>
    </source>
</evidence>
<evidence type="ECO:0000256" key="2">
    <source>
        <dbReference type="SAM" id="MobiDB-lite"/>
    </source>
</evidence>
<evidence type="ECO:0000269" key="3">
    <source>
    </source>
</evidence>
<evidence type="ECO:0000269" key="4">
    <source>
    </source>
</evidence>
<evidence type="ECO:0000269" key="5">
    <source>
    </source>
</evidence>
<evidence type="ECO:0000269" key="6">
    <source>
    </source>
</evidence>
<evidence type="ECO:0000269" key="7">
    <source>
    </source>
</evidence>
<evidence type="ECO:0000269" key="8">
    <source>
    </source>
</evidence>
<evidence type="ECO:0000269" key="9">
    <source>
    </source>
</evidence>
<evidence type="ECO:0000269" key="10">
    <source>
    </source>
</evidence>
<evidence type="ECO:0000269" key="11">
    <source>
    </source>
</evidence>
<evidence type="ECO:0000269" key="12">
    <source>
    </source>
</evidence>
<evidence type="ECO:0000305" key="13"/>
<evidence type="ECO:0000305" key="14">
    <source>
    </source>
</evidence>
<proteinExistence type="evidence at protein level"/>
<name>ABI3_ARATH</name>
<reference key="1">
    <citation type="journal article" date="1992" name="Plant Cell">
        <title>Isolation of the Arabidopsis ABI3 gene by positional cloning.</title>
        <authorList>
            <person name="Giraudat J."/>
            <person name="Hauge B.M."/>
            <person name="Valon C."/>
            <person name="Smalle J."/>
            <person name="Parcy F."/>
            <person name="Goodman H.M."/>
        </authorList>
    </citation>
    <scope>NUCLEOTIDE SEQUENCE [GENOMIC DNA / MRNA]</scope>
    <source>
        <strain>cv. Columbia</strain>
        <tissue>Fruit</tissue>
    </source>
</reference>
<reference key="2">
    <citation type="journal article" date="2000" name="DNA Res.">
        <title>Structural analysis of Arabidopsis thaliana chromosome 3. II. Sequence features of the 4,251,695 bp regions covered by 90 P1, TAC and BAC clones.</title>
        <authorList>
            <person name="Kaneko T."/>
            <person name="Katoh T."/>
            <person name="Sato S."/>
            <person name="Nakamura Y."/>
            <person name="Asamizu E."/>
            <person name="Tabata S."/>
        </authorList>
    </citation>
    <scope>NUCLEOTIDE SEQUENCE [LARGE SCALE GENOMIC DNA]</scope>
    <source>
        <strain>cv. Columbia</strain>
    </source>
</reference>
<reference key="3">
    <citation type="journal article" date="2017" name="Plant J.">
        <title>Araport11: a complete reannotation of the Arabidopsis thaliana reference genome.</title>
        <authorList>
            <person name="Cheng C.Y."/>
            <person name="Krishnakumar V."/>
            <person name="Chan A.P."/>
            <person name="Thibaud-Nissen F."/>
            <person name="Schobel S."/>
            <person name="Town C.D."/>
        </authorList>
    </citation>
    <scope>GENOME REANNOTATION</scope>
    <source>
        <strain>cv. Columbia</strain>
    </source>
</reference>
<reference key="4">
    <citation type="submission" date="2005-03" db="EMBL/GenBank/DDBJ databases">
        <title>Large-scale analysis of RIKEN Arabidopsis full-length (RAFL) cDNAs.</title>
        <authorList>
            <person name="Totoki Y."/>
            <person name="Seki M."/>
            <person name="Ishida J."/>
            <person name="Nakajima M."/>
            <person name="Enju A."/>
            <person name="Kamiya A."/>
            <person name="Narusaka M."/>
            <person name="Shin-i T."/>
            <person name="Nakagawa M."/>
            <person name="Sakamoto N."/>
            <person name="Oishi K."/>
            <person name="Kohara Y."/>
            <person name="Kobayashi M."/>
            <person name="Toyoda A."/>
            <person name="Sakaki Y."/>
            <person name="Sakurai T."/>
            <person name="Iida K."/>
            <person name="Akiyama K."/>
            <person name="Satou M."/>
            <person name="Toyoda T."/>
            <person name="Konagaya A."/>
            <person name="Carninci P."/>
            <person name="Kawai J."/>
            <person name="Hayashizaki Y."/>
            <person name="Shinozaki K."/>
        </authorList>
    </citation>
    <scope>NUCLEOTIDE SEQUENCE [LARGE SCALE MRNA]</scope>
    <source>
        <strain>cv. Columbia</strain>
    </source>
</reference>
<reference key="5">
    <citation type="journal article" date="2006" name="Plant Cell Physiol.">
        <title>Isolation and characterization of high temperature-resistant germination mutants of Arabidopsis thaliana.</title>
        <authorList>
            <person name="Tamura N."/>
            <person name="Yoshida T."/>
            <person name="Tanaka A."/>
            <person name="Sasaki R."/>
            <person name="Bando A."/>
            <person name="Toh S."/>
            <person name="Lepiniec L."/>
            <person name="Kawakami N."/>
        </authorList>
    </citation>
    <scope>NUCLEOTIDE SEQUENCE [GENOMIC DNA] OF 2-719</scope>
    <source>
        <strain>cv. Wassilewskija</strain>
    </source>
</reference>
<reference key="6">
    <citation type="journal article" date="2007" name="Genetics">
        <title>The genetic architecture of shoot branching in Arabidopsis thaliana: a comparative assessment of candidate gene associations vs. quantitative trait locus mapping.</title>
        <authorList>
            <person name="Ehrenreich I.M."/>
            <person name="Stafford P.A."/>
            <person name="Purugganan M.D."/>
        </authorList>
    </citation>
    <scope>NUCLEOTIDE SEQUENCE [GENOMIC DNA] OF 48-302</scope>
    <scope>VARIANTS LEU-225; GLU-231 AND THR-248</scope>
    <source>
        <strain>cv. An-1</strain>
        <strain>cv. Br-0</strain>
        <strain>cv. Ct-1</strain>
        <strain>cv. Cvi-1</strain>
        <strain>cv. Edi-0</strain>
        <strain>cv. Ga-0</strain>
        <strain>cv. Kas-1</strain>
        <strain>cv. Kin-0</strain>
        <strain>cv. Landsberg erecta</strain>
        <strain>cv. Ll-0</strain>
        <strain>cv. Lz-0</strain>
        <strain>cv. Ms-0</strain>
        <strain>cv. Mt-0</strain>
        <strain>cv. Nok-3</strain>
        <strain>cv. Oy-0</strain>
        <strain>cv. Se-0</strain>
        <strain>cv. Sorbo</strain>
        <strain>cv. Tsu-1</strain>
        <strain>cv. Van-0</strain>
        <strain>cv. Wa-1</strain>
        <strain>cv. Wassilewskija</strain>
    </source>
</reference>
<reference key="7">
    <citation type="journal article" date="2000" name="Plant J.">
        <title>Interactions of the developmental regulator ABI3 with proteins identified from developing Arabidopsis seeds.</title>
        <authorList>
            <person name="Kurup S."/>
            <person name="Jones H.D."/>
            <person name="Holdsworth M.J."/>
        </authorList>
    </citation>
    <scope>INTERACTION WITH APRR1; AIP2; AIP3 AND AIP4</scope>
</reference>
<reference key="8">
    <citation type="journal article" date="2001" name="Plant J.">
        <title>Physical interactions between ABA response loci of Arabidopsis.</title>
        <authorList>
            <person name="Nakamura S."/>
            <person name="Lynch T.J."/>
            <person name="Finkelstein R.R."/>
        </authorList>
    </citation>
    <scope>INTERACTION WITH ABI5</scope>
</reference>
<reference key="9">
    <citation type="journal article" date="2003" name="J. Biol. Chem.">
        <title>Synergistic activation of seed storage protein gene expression in Arabidopsis by ABI3 and two bZIPs related to OPAQUE2.</title>
        <authorList>
            <person name="Lara P."/>
            <person name="Onate-Sanchez L."/>
            <person name="Abraham Z."/>
            <person name="Ferrandiz C."/>
            <person name="Diaz I."/>
            <person name="Carbonero P."/>
            <person name="Vicente-Carbajosa J."/>
        </authorList>
    </citation>
    <scope>INTERACTION WITH BZIP10 AND BZIP25</scope>
    <scope>DEVELOPMENTAL STAGE</scope>
    <source>
        <strain>cv. Columbia</strain>
    </source>
</reference>
<reference key="10">
    <citation type="journal article" date="2005" name="Genes Dev.">
        <title>The AIP2 E3 ligase acts as a novel negative regulator of ABA signaling by promoting ABI3 degradation.</title>
        <authorList>
            <person name="Zhang X."/>
            <person name="Garreton V."/>
            <person name="Chua N.H."/>
        </authorList>
    </citation>
    <scope>INTERACTION WITH AIP2</scope>
    <scope>SUBCELLULAR LOCATION</scope>
    <scope>UBIQUITINATION</scope>
</reference>
<reference key="11">
    <citation type="journal article" date="2007" name="Development">
        <title>The role of Arabidopsis SCAR genes in ARP2-ARP3-dependent cell morphogenesis.</title>
        <authorList>
            <person name="Uhrig J.F."/>
            <person name="Mutondo M."/>
            <person name="Zimmermann I."/>
            <person name="Deeks M.J."/>
            <person name="Machesky L.M."/>
            <person name="Thomas P."/>
            <person name="Uhrig S."/>
            <person name="Rambke C."/>
            <person name="Hussey P.J."/>
            <person name="Huelskamp M."/>
        </authorList>
    </citation>
    <scope>INTERACTION WITH SPK1 AND SCAR3</scope>
</reference>
<reference key="12">
    <citation type="journal article" date="2008" name="Trends Plant Sci.">
        <title>The plant B3 superfamily.</title>
        <authorList>
            <person name="Swaminathan K."/>
            <person name="Peterson K."/>
            <person name="Jack T."/>
        </authorList>
    </citation>
    <scope>GENE FAMILY</scope>
</reference>
<reference key="13">
    <citation type="journal article" date="2009" name="Plant Cell">
        <title>A pivotal role of the basic leucine zipper transcription factor bZIP53 in the regulation of Arabidopsis seed maturation gene expression based on heterodimerization and protein complex formation.</title>
        <authorList>
            <person name="Alonso R."/>
            <person name="Onate-Sanchez L."/>
            <person name="Weltmeier F."/>
            <person name="Ehlert A."/>
            <person name="Diaz I."/>
            <person name="Dietrich K."/>
            <person name="Vicente-Carbajosa J."/>
            <person name="Droege-Laser W."/>
        </authorList>
    </citation>
    <scope>FUNCTION</scope>
    <scope>INTERACTION WITH BZIP10; BZIP25 AND BZIP53</scope>
</reference>
<reference key="14">
    <citation type="journal article" date="2010" name="Plant Cell">
        <title>The conserved splicing factor SUA controls alternative splicing of the developmental regulator ABI3 in Arabidopsis.</title>
        <authorList>
            <person name="Sugliani M."/>
            <person name="Brambilla V."/>
            <person name="Clerkx E.J."/>
            <person name="Koornneef M."/>
            <person name="Soppe W.J."/>
        </authorList>
    </citation>
    <scope>ALTERNATIVE SPLICING</scope>
    <scope>TISSUE SPECIFICITY</scope>
</reference>
<reference key="15">
    <citation type="journal article" date="2010" name="Plant Physiol.">
        <title>Epigenetic regulation of gene programs by EMF1 and EMF2 in Arabidopsis.</title>
        <authorList>
            <person name="Kim S.Y."/>
            <person name="Zhu T."/>
            <person name="Sung Z.R."/>
        </authorList>
    </citation>
    <scope>INDUCTION BY EMF1 AND EMF2</scope>
</reference>
<reference key="16">
    <citation type="journal article" date="2013" name="Proc. Natl. Acad. Sci. U.S.A.">
        <title>ABI3 controls embryo degreening through Mendel's I locus.</title>
        <authorList>
            <person name="Delmas F."/>
            <person name="Sankaranarayanan S."/>
            <person name="Deb S."/>
            <person name="Widdup E."/>
            <person name="Bournonville C."/>
            <person name="Bollier N."/>
            <person name="Northey J.G."/>
            <person name="McCourt P."/>
            <person name="Samuel M.A."/>
        </authorList>
    </citation>
    <scope>FUNCTION</scope>
    <scope>SUBCELLULAR LOCATION</scope>
</reference>
<dbReference type="EMBL" id="X68141">
    <property type="protein sequence ID" value="CAA48241.1"/>
    <property type="molecule type" value="mRNA"/>
</dbReference>
<dbReference type="EMBL" id="AJ002473">
    <property type="protein sequence ID" value="CAA05484.1"/>
    <property type="molecule type" value="Genomic_DNA"/>
</dbReference>
<dbReference type="EMBL" id="AP000740">
    <property type="protein sequence ID" value="BAB01214.1"/>
    <property type="status" value="ALT_SEQ"/>
    <property type="molecule type" value="Genomic_DNA"/>
</dbReference>
<dbReference type="EMBL" id="CP002686">
    <property type="protein sequence ID" value="AEE76933.1"/>
    <property type="molecule type" value="Genomic_DNA"/>
</dbReference>
<dbReference type="EMBL" id="AK220739">
    <property type="protein sequence ID" value="BAD93896.1"/>
    <property type="molecule type" value="mRNA"/>
</dbReference>
<dbReference type="EMBL" id="AK220879">
    <property type="protein sequence ID" value="BAD94272.1"/>
    <property type="molecule type" value="mRNA"/>
</dbReference>
<dbReference type="EMBL" id="AB253328">
    <property type="protein sequence ID" value="BAE96106.1"/>
    <property type="molecule type" value="Genomic_DNA"/>
</dbReference>
<dbReference type="EMBL" id="EF597723">
    <property type="protein sequence ID" value="ABR21503.1"/>
    <property type="molecule type" value="Genomic_DNA"/>
</dbReference>
<dbReference type="EMBL" id="EF597724">
    <property type="protein sequence ID" value="ABR21504.1"/>
    <property type="molecule type" value="Genomic_DNA"/>
</dbReference>
<dbReference type="EMBL" id="EF597725">
    <property type="protein sequence ID" value="ABR21505.1"/>
    <property type="molecule type" value="Genomic_DNA"/>
</dbReference>
<dbReference type="EMBL" id="EF597726">
    <property type="protein sequence ID" value="ABR21506.1"/>
    <property type="molecule type" value="Genomic_DNA"/>
</dbReference>
<dbReference type="EMBL" id="EF597727">
    <property type="protein sequence ID" value="ABR21507.1"/>
    <property type="molecule type" value="Genomic_DNA"/>
</dbReference>
<dbReference type="EMBL" id="EF597728">
    <property type="protein sequence ID" value="ABR21508.1"/>
    <property type="molecule type" value="Genomic_DNA"/>
</dbReference>
<dbReference type="EMBL" id="EF597729">
    <property type="protein sequence ID" value="ABR21509.1"/>
    <property type="molecule type" value="Genomic_DNA"/>
</dbReference>
<dbReference type="EMBL" id="EF597730">
    <property type="protein sequence ID" value="ABR21510.1"/>
    <property type="molecule type" value="Genomic_DNA"/>
</dbReference>
<dbReference type="EMBL" id="EF597731">
    <property type="protein sequence ID" value="ABR21511.1"/>
    <property type="molecule type" value="Genomic_DNA"/>
</dbReference>
<dbReference type="EMBL" id="EF597732">
    <property type="protein sequence ID" value="ABR21512.1"/>
    <property type="molecule type" value="Genomic_DNA"/>
</dbReference>
<dbReference type="EMBL" id="EF597733">
    <property type="protein sequence ID" value="ABR21513.1"/>
    <property type="molecule type" value="Genomic_DNA"/>
</dbReference>
<dbReference type="EMBL" id="EF597734">
    <property type="protein sequence ID" value="ABR21514.1"/>
    <property type="molecule type" value="Genomic_DNA"/>
</dbReference>
<dbReference type="EMBL" id="EF597735">
    <property type="protein sequence ID" value="ABR21515.1"/>
    <property type="molecule type" value="Genomic_DNA"/>
</dbReference>
<dbReference type="EMBL" id="EF597736">
    <property type="protein sequence ID" value="ABR21516.1"/>
    <property type="molecule type" value="Genomic_DNA"/>
</dbReference>
<dbReference type="EMBL" id="EF597737">
    <property type="protein sequence ID" value="ABR21517.1"/>
    <property type="molecule type" value="Genomic_DNA"/>
</dbReference>
<dbReference type="EMBL" id="EF597738">
    <property type="protein sequence ID" value="ABR21518.1"/>
    <property type="molecule type" value="Genomic_DNA"/>
</dbReference>
<dbReference type="EMBL" id="EF597739">
    <property type="protein sequence ID" value="ABR21519.1"/>
    <property type="molecule type" value="Genomic_DNA"/>
</dbReference>
<dbReference type="EMBL" id="EF597740">
    <property type="protein sequence ID" value="ABR21520.1"/>
    <property type="molecule type" value="Genomic_DNA"/>
</dbReference>
<dbReference type="EMBL" id="EF597741">
    <property type="protein sequence ID" value="ABR21521.1"/>
    <property type="molecule type" value="Genomic_DNA"/>
</dbReference>
<dbReference type="EMBL" id="EF597743">
    <property type="protein sequence ID" value="ABR21523.1"/>
    <property type="molecule type" value="Genomic_DNA"/>
</dbReference>
<dbReference type="EMBL" id="EF597744">
    <property type="protein sequence ID" value="ABR21524.1"/>
    <property type="molecule type" value="Genomic_DNA"/>
</dbReference>
<dbReference type="PIR" id="JQ1676">
    <property type="entry name" value="JQ1676"/>
</dbReference>
<dbReference type="RefSeq" id="NP_189108.1">
    <molecule id="Q01593-1"/>
    <property type="nucleotide sequence ID" value="NM_113376.4"/>
</dbReference>
<dbReference type="SMR" id="Q01593"/>
<dbReference type="BioGRID" id="7392">
    <property type="interactions" value="18"/>
</dbReference>
<dbReference type="FunCoup" id="Q01593">
    <property type="interactions" value="129"/>
</dbReference>
<dbReference type="IntAct" id="Q01593">
    <property type="interactions" value="9"/>
</dbReference>
<dbReference type="STRING" id="3702.Q01593"/>
<dbReference type="GlyGen" id="Q01593">
    <property type="glycosylation" value="1 site"/>
</dbReference>
<dbReference type="iPTMnet" id="Q01593"/>
<dbReference type="PaxDb" id="3702-AT3G24650.1"/>
<dbReference type="ProteomicsDB" id="244535">
    <molecule id="Q01593-1"/>
</dbReference>
<dbReference type="EnsemblPlants" id="AT3G24650.1">
    <molecule id="Q01593-1"/>
    <property type="protein sequence ID" value="AT3G24650.1"/>
    <property type="gene ID" value="AT3G24650"/>
</dbReference>
<dbReference type="GeneID" id="822061"/>
<dbReference type="Gramene" id="AT3G24650.1">
    <molecule id="Q01593-1"/>
    <property type="protein sequence ID" value="AT3G24650.1"/>
    <property type="gene ID" value="AT3G24650"/>
</dbReference>
<dbReference type="KEGG" id="ath:AT3G24650"/>
<dbReference type="Araport" id="AT3G24650"/>
<dbReference type="TAIR" id="AT3G24650">
    <property type="gene designation" value="ABI3"/>
</dbReference>
<dbReference type="eggNOG" id="ENOG502QWRF">
    <property type="taxonomic scope" value="Eukaryota"/>
</dbReference>
<dbReference type="HOGENOM" id="CLU_023549_0_0_1"/>
<dbReference type="InParanoid" id="Q01593"/>
<dbReference type="OMA" id="PAFFMEW"/>
<dbReference type="PhylomeDB" id="Q01593"/>
<dbReference type="PRO" id="PR:Q01593"/>
<dbReference type="Proteomes" id="UP000006548">
    <property type="component" value="Chromosome 3"/>
</dbReference>
<dbReference type="ExpressionAtlas" id="Q01593">
    <property type="expression patterns" value="baseline and differential"/>
</dbReference>
<dbReference type="GO" id="GO:0005829">
    <property type="term" value="C:cytosol"/>
    <property type="evidence" value="ECO:0000314"/>
    <property type="project" value="UniProtKB"/>
</dbReference>
<dbReference type="GO" id="GO:0005634">
    <property type="term" value="C:nucleus"/>
    <property type="evidence" value="ECO:0000314"/>
    <property type="project" value="UniProtKB"/>
</dbReference>
<dbReference type="GO" id="GO:0003677">
    <property type="term" value="F:DNA binding"/>
    <property type="evidence" value="ECO:0000314"/>
    <property type="project" value="TAIR"/>
</dbReference>
<dbReference type="GO" id="GO:0003700">
    <property type="term" value="F:DNA-binding transcription factor activity"/>
    <property type="evidence" value="ECO:0000314"/>
    <property type="project" value="TAIR"/>
</dbReference>
<dbReference type="GO" id="GO:0043565">
    <property type="term" value="F:sequence-specific DNA binding"/>
    <property type="evidence" value="ECO:0000314"/>
    <property type="project" value="TAIR"/>
</dbReference>
<dbReference type="GO" id="GO:0009738">
    <property type="term" value="P:abscisic acid-activated signaling pathway"/>
    <property type="evidence" value="ECO:0007669"/>
    <property type="project" value="UniProtKB-KW"/>
</dbReference>
<dbReference type="GO" id="GO:0009793">
    <property type="term" value="P:embryo development ending in seed dormancy"/>
    <property type="evidence" value="ECO:0000270"/>
    <property type="project" value="TAIR"/>
</dbReference>
<dbReference type="GO" id="GO:0031930">
    <property type="term" value="P:mitochondria-nucleus signaling pathway"/>
    <property type="evidence" value="ECO:0000314"/>
    <property type="project" value="TAIR"/>
</dbReference>
<dbReference type="GO" id="GO:0009657">
    <property type="term" value="P:plastid organization"/>
    <property type="evidence" value="ECO:0000315"/>
    <property type="project" value="TAIR"/>
</dbReference>
<dbReference type="GO" id="GO:0045893">
    <property type="term" value="P:positive regulation of DNA-templated transcription"/>
    <property type="evidence" value="ECO:0000314"/>
    <property type="project" value="TAIR"/>
</dbReference>
<dbReference type="GO" id="GO:0009737">
    <property type="term" value="P:response to abscisic acid"/>
    <property type="evidence" value="ECO:0000315"/>
    <property type="project" value="TAIR"/>
</dbReference>
<dbReference type="GO" id="GO:0009733">
    <property type="term" value="P:response to auxin"/>
    <property type="evidence" value="ECO:0000315"/>
    <property type="project" value="TAIR"/>
</dbReference>
<dbReference type="CDD" id="cd10015">
    <property type="entry name" value="BfiI_C_EcoRII_N_B3"/>
    <property type="match status" value="1"/>
</dbReference>
<dbReference type="FunFam" id="2.40.330.10:FF:000003">
    <property type="entry name" value="B3 domain-containing transcription factor FUS3"/>
    <property type="match status" value="1"/>
</dbReference>
<dbReference type="Gene3D" id="2.40.330.10">
    <property type="entry name" value="DNA-binding pseudobarrel domain"/>
    <property type="match status" value="1"/>
</dbReference>
<dbReference type="InterPro" id="IPR003340">
    <property type="entry name" value="B3_DNA-bd"/>
</dbReference>
<dbReference type="InterPro" id="IPR015300">
    <property type="entry name" value="DNA-bd_pseudobarrel_sf"/>
</dbReference>
<dbReference type="InterPro" id="IPR044800">
    <property type="entry name" value="LEC2-like"/>
</dbReference>
<dbReference type="PANTHER" id="PTHR31140">
    <property type="entry name" value="B3 DOMAIN-CONTAINING TRANSCRIPTION FACTOR ABI3"/>
    <property type="match status" value="1"/>
</dbReference>
<dbReference type="PANTHER" id="PTHR31140:SF81">
    <property type="entry name" value="B3 DOMAIN-CONTAINING TRANSCRIPTION FACTOR ABI3"/>
    <property type="match status" value="1"/>
</dbReference>
<dbReference type="Pfam" id="PF02362">
    <property type="entry name" value="B3"/>
    <property type="match status" value="1"/>
</dbReference>
<dbReference type="SMART" id="SM01019">
    <property type="entry name" value="B3"/>
    <property type="match status" value="1"/>
</dbReference>
<dbReference type="SUPFAM" id="SSF101936">
    <property type="entry name" value="DNA-binding pseudobarrel domain"/>
    <property type="match status" value="1"/>
</dbReference>
<dbReference type="PROSITE" id="PS50863">
    <property type="entry name" value="B3"/>
    <property type="match status" value="1"/>
</dbReference>
<keyword id="KW-0938">Abscisic acid signaling pathway</keyword>
<keyword id="KW-0010">Activator</keyword>
<keyword id="KW-0025">Alternative splicing</keyword>
<keyword id="KW-0963">Cytoplasm</keyword>
<keyword id="KW-0217">Developmental protein</keyword>
<keyword id="KW-0238">DNA-binding</keyword>
<keyword id="KW-0539">Nucleus</keyword>
<keyword id="KW-1185">Reference proteome</keyword>
<keyword id="KW-0804">Transcription</keyword>
<keyword id="KW-0805">Transcription regulation</keyword>
<keyword id="KW-0832">Ubl conjugation</keyword>
<gene>
    <name type="primary">ABI3</name>
    <name type="ordered locus">At3g24650</name>
    <name type="ORF">MSD24.2</name>
</gene>
<protein>
    <recommendedName>
        <fullName>B3 domain-containing transcription factor ABI3</fullName>
    </recommendedName>
    <alternativeName>
        <fullName>Protein ABSCISIC ACID-INSENSITIVE 3</fullName>
    </alternativeName>
</protein>
<accession>Q01593</accession>
<accession>A6N2M3</accession>
<accession>A6N2N0</accession>
<accession>A6N2P3</accession>
<accession>O23625</accession>
<accession>Q1EQV9</accession>
<accession>Q56ZT2</accession>
<accession>Q570G9</accession>